<organism>
    <name type="scientific">Mus musculus</name>
    <name type="common">Mouse</name>
    <dbReference type="NCBI Taxonomy" id="10090"/>
    <lineage>
        <taxon>Eukaryota</taxon>
        <taxon>Metazoa</taxon>
        <taxon>Chordata</taxon>
        <taxon>Craniata</taxon>
        <taxon>Vertebrata</taxon>
        <taxon>Euteleostomi</taxon>
        <taxon>Mammalia</taxon>
        <taxon>Eutheria</taxon>
        <taxon>Euarchontoglires</taxon>
        <taxon>Glires</taxon>
        <taxon>Rodentia</taxon>
        <taxon>Myomorpha</taxon>
        <taxon>Muroidea</taxon>
        <taxon>Muridae</taxon>
        <taxon>Murinae</taxon>
        <taxon>Mus</taxon>
        <taxon>Mus</taxon>
    </lineage>
</organism>
<sequence>MAFIAALGILMAGICPTVLCFSDDTWGIDILLHKNQESGTPDDSLTLASINTDFAFSLYKKMALKNPDKNIVFSPLSISAALALVSLGAKGNTLEEILEGLKFNLTETSEADIHQGFGHLLQRLSQPEDQDQINIGNAMFIEKDLQILAEFHEKTRALYQTEAFTADFQQPTEATKLINDYVSNQTQGMIKKLISELDDRTLMVLVNYIYFKGKWKISFDPQDTFESEFYLDEKRSVKVPMMKMKFLTTRHFRDEELSCSVLELKYTGNASALFILPDQGRMQQVEASLQPETLRKWWKSLKTRKIGELYLPKFSISTDYNLKDILPELGIKEIFSKQADLSGITGTKDLSVSQVVHKAVLDVAETGTEAAAATGFIFGFRSRRLQTMTVQFNRPFLMVISHTGVQTTLFMAKVTNPK</sequence>
<feature type="signal peptide" evidence="2">
    <location>
        <begin position="1"/>
        <end position="20"/>
    </location>
</feature>
<feature type="chain" id="PRO_0000032418" description="Serine protease inhibitor A3M">
    <location>
        <begin position="21"/>
        <end position="418"/>
    </location>
</feature>
<feature type="region of interest" description="RCL">
    <location>
        <begin position="367"/>
        <end position="392"/>
    </location>
</feature>
<feature type="site" description="Reactive bond" evidence="1">
    <location>
        <begin position="381"/>
        <end position="382"/>
    </location>
</feature>
<feature type="glycosylation site" description="N-linked (GlcNAc...) asparagine" evidence="4">
    <location>
        <position position="104"/>
    </location>
</feature>
<feature type="glycosylation site" description="N-linked (GlcNAc...) asparagine" evidence="2">
    <location>
        <position position="184"/>
    </location>
</feature>
<feature type="glycosylation site" description="N-linked (GlcNAc...) asparagine" evidence="4">
    <location>
        <position position="269"/>
    </location>
</feature>
<feature type="sequence conflict" description="In Ref. 1; CAA38949 and 3; AAH11158/AAH53337." evidence="5" ref="1 3">
    <original>KMA</original>
    <variation>ELV</variation>
    <location>
        <begin position="61"/>
        <end position="63"/>
    </location>
</feature>
<feature type="sequence conflict" description="In Ref. 1; CAA38949, 3; AAH11158/AAH53337 and 4; CAA49486." evidence="5" ref="1 3 4">
    <original>T</original>
    <variation>A</variation>
    <location>
        <position position="155"/>
    </location>
</feature>
<feature type="sequence conflict" description="In Ref. 1; CAA38949, 3; AAH11158/AAH53337 and 4; CAA49486." evidence="5" ref="1 3 4">
    <original>Q</original>
    <variation>K</variation>
    <location>
        <position position="170"/>
    </location>
</feature>
<feature type="sequence conflict" description="In Ref. 1; CAA38949, 3; AAH11158/AAH53337 and 4; CAA49486." evidence="5" ref="1 3 4">
    <original>TK</original>
    <variation>KN</variation>
    <location>
        <begin position="175"/>
        <end position="176"/>
    </location>
</feature>
<feature type="sequence conflict" description="In Ref. 1; CAA38949, 3; AAH11158/AAH53337 and 4; CAA49486." evidence="5" ref="1 3 4">
    <original>K</original>
    <variation>E</variation>
    <location>
        <position position="192"/>
    </location>
</feature>
<feature type="sequence conflict" description="In Ref. 1; CAA38949, 3; AAH11158/AAH53337 and 4; CAA49486." evidence="5" ref="1 3 4">
    <original>DR</original>
    <variation>TD</variation>
    <location>
        <begin position="199"/>
        <end position="200"/>
    </location>
</feature>
<feature type="sequence conflict" description="In Ref. 4; CAA49486." evidence="5" ref="4">
    <original>K</original>
    <variation>R</variation>
    <location>
        <position position="313"/>
    </location>
</feature>
<name>SPA3M_MOUSE</name>
<reference key="1">
    <citation type="journal article" date="1991" name="Biochem. J.">
        <title>Cloning, structure and expression of cDNA for mouse contrapsin and a related protein.</title>
        <authorList>
            <person name="Ohkubo K."/>
            <person name="Ogata S."/>
            <person name="Misumi Y."/>
            <person name="Takami N."/>
            <person name="Sinohara H."/>
            <person name="Ikehara Y."/>
        </authorList>
    </citation>
    <scope>NUCLEOTIDE SEQUENCE [MRNA]</scope>
</reference>
<reference key="2">
    <citation type="journal article" date="2009" name="PLoS Biol.">
        <title>Lineage-specific biology revealed by a finished genome assembly of the mouse.</title>
        <authorList>
            <person name="Church D.M."/>
            <person name="Goodstadt L."/>
            <person name="Hillier L.W."/>
            <person name="Zody M.C."/>
            <person name="Goldstein S."/>
            <person name="She X."/>
            <person name="Bult C.J."/>
            <person name="Agarwala R."/>
            <person name="Cherry J.L."/>
            <person name="DiCuccio M."/>
            <person name="Hlavina W."/>
            <person name="Kapustin Y."/>
            <person name="Meric P."/>
            <person name="Maglott D."/>
            <person name="Birtle Z."/>
            <person name="Marques A.C."/>
            <person name="Graves T."/>
            <person name="Zhou S."/>
            <person name="Teague B."/>
            <person name="Potamousis K."/>
            <person name="Churas C."/>
            <person name="Place M."/>
            <person name="Herschleb J."/>
            <person name="Runnheim R."/>
            <person name="Forrest D."/>
            <person name="Amos-Landgraf J."/>
            <person name="Schwartz D.C."/>
            <person name="Cheng Z."/>
            <person name="Lindblad-Toh K."/>
            <person name="Eichler E.E."/>
            <person name="Ponting C.P."/>
        </authorList>
    </citation>
    <scope>NUCLEOTIDE SEQUENCE [LARGE SCALE GENOMIC DNA]</scope>
    <source>
        <strain>C57BL/6J</strain>
    </source>
</reference>
<reference key="3">
    <citation type="journal article" date="2004" name="Genome Res.">
        <title>The status, quality, and expansion of the NIH full-length cDNA project: the Mammalian Gene Collection (MGC).</title>
        <authorList>
            <consortium name="The MGC Project Team"/>
        </authorList>
    </citation>
    <scope>NUCLEOTIDE SEQUENCE [LARGE SCALE MRNA]</scope>
    <source>
        <strain>FVB/N</strain>
        <tissue>Colon</tissue>
        <tissue>Liver</tissue>
    </source>
</reference>
<reference key="4">
    <citation type="submission" date="1992-12" db="EMBL/GenBank/DDBJ databases">
        <authorList>
            <person name="Inglis J.D."/>
        </authorList>
    </citation>
    <scope>NUCLEOTIDE SEQUENCE [MRNA] OF 145-418</scope>
    <source>
        <tissue>Liver</tissue>
    </source>
</reference>
<reference key="5">
    <citation type="submission" date="2009-01" db="UniProtKB">
        <authorList>
            <person name="Lubec G."/>
            <person name="Sunyer B."/>
            <person name="Chen W.-Q."/>
        </authorList>
    </citation>
    <scope>PROTEIN SEQUENCE OF 338-358</scope>
    <scope>IDENTIFICATION BY MASS SPECTROMETRY</scope>
    <source>
        <strain>OF1</strain>
        <tissue>Hippocampus</tissue>
    </source>
</reference>
<reference key="6">
    <citation type="journal article" date="2003" name="Genomics">
        <title>A review and comparison of the murine alpha1-antitrypsin and alpha1-antichymotrypsin multigene clusters with the human clade A serpins.</title>
        <authorList>
            <person name="Forsyth S."/>
            <person name="Horvath A."/>
            <person name="Coughlin P."/>
        </authorList>
    </citation>
    <scope>GENE FAMILY</scope>
    <scope>NOMENCLATURE</scope>
</reference>
<reference key="7">
    <citation type="journal article" date="2004" name="J. Mol. Evol.">
        <title>Expression patterns of murine antichymotrypsin-like genes reflect evolutionary divergence at the Serpina3 locus.</title>
        <authorList>
            <person name="Horvath A.J."/>
            <person name="Forsyth S.L."/>
            <person name="Coughlin P.B."/>
        </authorList>
    </citation>
    <scope>TISSUE SPECIFICITY</scope>
    <scope>REGION RCL</scope>
</reference>
<reference key="8">
    <citation type="journal article" date="2006" name="J. Proteome Res.">
        <title>Proteome-wide characterization of N-glycosylation events by diagonal chromatography.</title>
        <authorList>
            <person name="Ghesquiere B."/>
            <person name="Van Damme J."/>
            <person name="Martens L."/>
            <person name="Vandekerckhove J."/>
            <person name="Gevaert K."/>
        </authorList>
    </citation>
    <scope>GLYCOSYLATION [LARGE SCALE ANALYSIS] AT ASN-104 AND ASN-269</scope>
    <source>
        <strain>C57BL/6J</strain>
        <tissue>Plasma</tissue>
    </source>
</reference>
<accession>Q03734</accession>
<accession>E9Q926</accession>
<accession>Q62260</accession>
<protein>
    <recommendedName>
        <fullName>Serine protease inhibitor A3M</fullName>
        <shortName>Serpin A3M</shortName>
    </recommendedName>
</protein>
<proteinExistence type="evidence at protein level"/>
<evidence type="ECO:0000250" key="1"/>
<evidence type="ECO:0000255" key="2"/>
<evidence type="ECO:0000269" key="3">
    <source>
    </source>
</evidence>
<evidence type="ECO:0000269" key="4">
    <source>
    </source>
</evidence>
<evidence type="ECO:0000305" key="5"/>
<dbReference type="EMBL" id="X55148">
    <property type="protein sequence ID" value="CAA38949.1"/>
    <property type="molecule type" value="mRNA"/>
</dbReference>
<dbReference type="EMBL" id="AC117194">
    <property type="status" value="NOT_ANNOTATED_CDS"/>
    <property type="molecule type" value="Genomic_DNA"/>
</dbReference>
<dbReference type="EMBL" id="BC011158">
    <property type="protein sequence ID" value="AAH11158.1"/>
    <property type="molecule type" value="mRNA"/>
</dbReference>
<dbReference type="EMBL" id="BC053337">
    <property type="protein sequence ID" value="AAH53337.1"/>
    <property type="molecule type" value="mRNA"/>
</dbReference>
<dbReference type="EMBL" id="X69832">
    <property type="protein sequence ID" value="CAA49486.1"/>
    <property type="molecule type" value="mRNA"/>
</dbReference>
<dbReference type="CCDS" id="CCDS36538.1"/>
<dbReference type="PIR" id="S23675">
    <property type="entry name" value="S23675"/>
</dbReference>
<dbReference type="RefSeq" id="NP_033279.2">
    <property type="nucleotide sequence ID" value="NM_009253.3"/>
</dbReference>
<dbReference type="SMR" id="Q03734"/>
<dbReference type="BioGRID" id="203443">
    <property type="interactions" value="1"/>
</dbReference>
<dbReference type="FunCoup" id="Q03734">
    <property type="interactions" value="342"/>
</dbReference>
<dbReference type="STRING" id="10090.ENSMUSP00000130979"/>
<dbReference type="MEROPS" id="I04.029"/>
<dbReference type="GlyCosmos" id="Q03734">
    <property type="glycosylation" value="3 sites, No reported glycans"/>
</dbReference>
<dbReference type="GlyGen" id="Q03734">
    <property type="glycosylation" value="3 sites, 2 N-linked glycans (2 sites)"/>
</dbReference>
<dbReference type="iPTMnet" id="Q03734"/>
<dbReference type="PhosphoSitePlus" id="Q03734"/>
<dbReference type="SwissPalm" id="Q03734"/>
<dbReference type="CPTAC" id="non-CPTAC-3946"/>
<dbReference type="jPOST" id="Q03734"/>
<dbReference type="PaxDb" id="10090-ENSMUSP00000130979"/>
<dbReference type="PeptideAtlas" id="Q03734"/>
<dbReference type="ProteomicsDB" id="263307"/>
<dbReference type="DNASU" id="20717"/>
<dbReference type="Ensembl" id="ENSMUST00000101078.12">
    <property type="protein sequence ID" value="ENSMUSP00000098639.6"/>
    <property type="gene ID" value="ENSMUSG00000079012.12"/>
</dbReference>
<dbReference type="Ensembl" id="ENSMUST00000168797.2">
    <property type="protein sequence ID" value="ENSMUSP00000130979.2"/>
    <property type="gene ID" value="ENSMUSG00000079012.12"/>
</dbReference>
<dbReference type="GeneID" id="20717"/>
<dbReference type="KEGG" id="mmu:20717"/>
<dbReference type="UCSC" id="uc007oxf.2">
    <property type="organism name" value="mouse"/>
</dbReference>
<dbReference type="AGR" id="MGI:98378"/>
<dbReference type="CTD" id="20717"/>
<dbReference type="MGI" id="MGI:98378">
    <property type="gene designation" value="Serpina3m"/>
</dbReference>
<dbReference type="VEuPathDB" id="HostDB:ENSMUSG00000079012"/>
<dbReference type="eggNOG" id="KOG2392">
    <property type="taxonomic scope" value="Eukaryota"/>
</dbReference>
<dbReference type="GeneTree" id="ENSGT00940000154392"/>
<dbReference type="HOGENOM" id="CLU_023330_2_1_1"/>
<dbReference type="InParanoid" id="Q03734"/>
<dbReference type="OMA" id="HEVNSWA"/>
<dbReference type="OrthoDB" id="671595at2759"/>
<dbReference type="PhylomeDB" id="Q03734"/>
<dbReference type="TreeFam" id="TF343201"/>
<dbReference type="BioGRID-ORCS" id="20717">
    <property type="hits" value="0 hits in 76 CRISPR screens"/>
</dbReference>
<dbReference type="ChiTaRS" id="Serpina3m">
    <property type="organism name" value="mouse"/>
</dbReference>
<dbReference type="PRO" id="PR:Q03734"/>
<dbReference type="Proteomes" id="UP000000589">
    <property type="component" value="Chromosome 12"/>
</dbReference>
<dbReference type="RNAct" id="Q03734">
    <property type="molecule type" value="protein"/>
</dbReference>
<dbReference type="Bgee" id="ENSMUSG00000079012">
    <property type="expression patterns" value="Expressed in left lobe of liver and 43 other cell types or tissues"/>
</dbReference>
<dbReference type="GO" id="GO:0005615">
    <property type="term" value="C:extracellular space"/>
    <property type="evidence" value="ECO:0007669"/>
    <property type="project" value="InterPro"/>
</dbReference>
<dbReference type="GO" id="GO:0004867">
    <property type="term" value="F:serine-type endopeptidase inhibitor activity"/>
    <property type="evidence" value="ECO:0007669"/>
    <property type="project" value="UniProtKB-KW"/>
</dbReference>
<dbReference type="GO" id="GO:0034097">
    <property type="term" value="P:response to cytokine"/>
    <property type="evidence" value="ECO:0000314"/>
    <property type="project" value="MGI"/>
</dbReference>
<dbReference type="GO" id="GO:0043434">
    <property type="term" value="P:response to peptide hormone"/>
    <property type="evidence" value="ECO:0000314"/>
    <property type="project" value="MGI"/>
</dbReference>
<dbReference type="CDD" id="cd19551">
    <property type="entry name" value="serpinA3_A1AC"/>
    <property type="match status" value="1"/>
</dbReference>
<dbReference type="FunFam" id="3.30.497.10:FF:000001">
    <property type="entry name" value="Serine protease inhibitor"/>
    <property type="match status" value="1"/>
</dbReference>
<dbReference type="FunFam" id="2.30.39.10:FF:000002">
    <property type="entry name" value="Serpin family D member 1"/>
    <property type="match status" value="1"/>
</dbReference>
<dbReference type="Gene3D" id="2.30.39.10">
    <property type="entry name" value="Alpha-1-antitrypsin, domain 1"/>
    <property type="match status" value="1"/>
</dbReference>
<dbReference type="Gene3D" id="3.30.497.10">
    <property type="entry name" value="Antithrombin, subunit I, domain 2"/>
    <property type="match status" value="1"/>
</dbReference>
<dbReference type="InterPro" id="IPR023795">
    <property type="entry name" value="Serpin_CS"/>
</dbReference>
<dbReference type="InterPro" id="IPR023796">
    <property type="entry name" value="Serpin_dom"/>
</dbReference>
<dbReference type="InterPro" id="IPR000215">
    <property type="entry name" value="Serpin_fam"/>
</dbReference>
<dbReference type="InterPro" id="IPR036186">
    <property type="entry name" value="Serpin_sf"/>
</dbReference>
<dbReference type="InterPro" id="IPR042178">
    <property type="entry name" value="Serpin_sf_1"/>
</dbReference>
<dbReference type="InterPro" id="IPR042185">
    <property type="entry name" value="Serpin_sf_2"/>
</dbReference>
<dbReference type="PANTHER" id="PTHR11461:SF195">
    <property type="entry name" value="SERINE PROTEASE INHIBITOR A3A-RELATED"/>
    <property type="match status" value="1"/>
</dbReference>
<dbReference type="PANTHER" id="PTHR11461">
    <property type="entry name" value="SERINE PROTEASE INHIBITOR, SERPIN"/>
    <property type="match status" value="1"/>
</dbReference>
<dbReference type="Pfam" id="PF00079">
    <property type="entry name" value="Serpin"/>
    <property type="match status" value="1"/>
</dbReference>
<dbReference type="SMART" id="SM00093">
    <property type="entry name" value="SERPIN"/>
    <property type="match status" value="1"/>
</dbReference>
<dbReference type="SUPFAM" id="SSF56574">
    <property type="entry name" value="Serpins"/>
    <property type="match status" value="1"/>
</dbReference>
<dbReference type="PROSITE" id="PS00284">
    <property type="entry name" value="SERPIN"/>
    <property type="match status" value="1"/>
</dbReference>
<comment type="subcellular location">
    <subcellularLocation>
        <location evidence="1">Secreted</location>
    </subcellularLocation>
</comment>
<comment type="tissue specificity">
    <text evidence="3">Expressed in liver and testis.</text>
</comment>
<comment type="domain">
    <text evidence="1">The reactive center loop (RCL) extends out from the body of the protein and directs binding to the target protease. The protease cleaves the serpin at the reactive site within the RCL, establishing a covalent linkage between the serpin reactive site and the protease. The resulting inactive serpin-protease complex is highly stable (By similarity). Variability within the reactive center loop (RCL) sequences of Serpina3 paralogs may determine target protease specificity.</text>
</comment>
<comment type="miscellaneous">
    <text>The single human alpha1-antichymotrypsin gene (SERPINA3) is represented by a cluster of 14 individual murine paralogs.</text>
</comment>
<comment type="similarity">
    <text evidence="5">Belongs to the serpin family.</text>
</comment>
<gene>
    <name type="primary">Serpina3m</name>
</gene>
<keyword id="KW-0903">Direct protein sequencing</keyword>
<keyword id="KW-0325">Glycoprotein</keyword>
<keyword id="KW-0646">Protease inhibitor</keyword>
<keyword id="KW-1185">Reference proteome</keyword>
<keyword id="KW-0964">Secreted</keyword>
<keyword id="KW-0722">Serine protease inhibitor</keyword>
<keyword id="KW-0732">Signal</keyword>